<gene>
    <name evidence="1" type="primary">atpH</name>
    <name type="ordered locus">Heak452_Cp077</name>
</gene>
<reference key="1">
    <citation type="journal article" date="2008" name="BMC Genomics">
        <title>Chloroplast genome sequencing analysis of Heterosigma akashiwo CCMP452 (West Atlantic) and NIES293 (West Pacific) strains.</title>
        <authorList>
            <person name="Cattolico R.A."/>
            <person name="Jacobs M.A."/>
            <person name="Zhou Y."/>
            <person name="Chang J."/>
            <person name="Duplessis M."/>
            <person name="Lybrand T."/>
            <person name="McKay J."/>
            <person name="Ong H.C."/>
            <person name="Sims E."/>
            <person name="Rocap G."/>
        </authorList>
    </citation>
    <scope>NUCLEOTIDE SEQUENCE [LARGE SCALE GENOMIC DNA]</scope>
</reference>
<keyword id="KW-0066">ATP synthesis</keyword>
<keyword id="KW-0138">CF(0)</keyword>
<keyword id="KW-0150">Chloroplast</keyword>
<keyword id="KW-0375">Hydrogen ion transport</keyword>
<keyword id="KW-0406">Ion transport</keyword>
<keyword id="KW-0446">Lipid-binding</keyword>
<keyword id="KW-0472">Membrane</keyword>
<keyword id="KW-0934">Plastid</keyword>
<keyword id="KW-0793">Thylakoid</keyword>
<keyword id="KW-0812">Transmembrane</keyword>
<keyword id="KW-1133">Transmembrane helix</keyword>
<keyword id="KW-0813">Transport</keyword>
<protein>
    <recommendedName>
        <fullName evidence="1">ATP synthase subunit c, chloroplastic</fullName>
    </recommendedName>
    <alternativeName>
        <fullName evidence="1">ATP synthase F(0) sector subunit c</fullName>
    </alternativeName>
    <alternativeName>
        <fullName evidence="1">ATPase subunit III</fullName>
    </alternativeName>
    <alternativeName>
        <fullName evidence="1">F-type ATPase subunit c</fullName>
        <shortName evidence="1">F-ATPase subunit c</shortName>
    </alternativeName>
    <alternativeName>
        <fullName evidence="1">Lipid-binding protein</fullName>
    </alternativeName>
</protein>
<organism>
    <name type="scientific">Heterosigma akashiwo (strain CCMP452 / OLISTH)</name>
    <dbReference type="NCBI Taxonomy" id="536046"/>
    <lineage>
        <taxon>Eukaryota</taxon>
        <taxon>Sar</taxon>
        <taxon>Stramenopiles</taxon>
        <taxon>Ochrophyta</taxon>
        <taxon>Raphidophyceae</taxon>
        <taxon>Chattonellales</taxon>
        <taxon>Chattonellaceae</taxon>
        <taxon>Heterosigma</taxon>
    </lineage>
</organism>
<evidence type="ECO:0000255" key="1">
    <source>
        <dbReference type="HAMAP-Rule" id="MF_01396"/>
    </source>
</evidence>
<feature type="chain" id="PRO_0000362975" description="ATP synthase subunit c, chloroplastic">
    <location>
        <begin position="1"/>
        <end position="82"/>
    </location>
</feature>
<feature type="transmembrane region" description="Helical" evidence="1">
    <location>
        <begin position="4"/>
        <end position="24"/>
    </location>
</feature>
<feature type="transmembrane region" description="Helical" evidence="1">
    <location>
        <begin position="57"/>
        <end position="77"/>
    </location>
</feature>
<feature type="site" description="Reversibly protonated during proton transport" evidence="1">
    <location>
        <position position="61"/>
    </location>
</feature>
<proteinExistence type="inferred from homology"/>
<sequence length="82" mass="8171">MDSIISAASVIAAGLSVGLAAIGPGIGQGNAAGQAVEGIARQPEAENKIRGTLLLSLAFMEALTIYGLVVALSLLFANPFTS</sequence>
<dbReference type="EMBL" id="EU168191">
    <property type="protein sequence ID" value="ABV70125.1"/>
    <property type="molecule type" value="Genomic_DNA"/>
</dbReference>
<dbReference type="RefSeq" id="YP_001936378.1">
    <property type="nucleotide sequence ID" value="NC_010772.1"/>
</dbReference>
<dbReference type="SMR" id="B2XTP2"/>
<dbReference type="GeneID" id="6335586"/>
<dbReference type="GO" id="GO:0009535">
    <property type="term" value="C:chloroplast thylakoid membrane"/>
    <property type="evidence" value="ECO:0007669"/>
    <property type="project" value="UniProtKB-SubCell"/>
</dbReference>
<dbReference type="GO" id="GO:0045259">
    <property type="term" value="C:proton-transporting ATP synthase complex"/>
    <property type="evidence" value="ECO:0007669"/>
    <property type="project" value="UniProtKB-KW"/>
</dbReference>
<dbReference type="GO" id="GO:0033177">
    <property type="term" value="C:proton-transporting two-sector ATPase complex, proton-transporting domain"/>
    <property type="evidence" value="ECO:0007669"/>
    <property type="project" value="InterPro"/>
</dbReference>
<dbReference type="GO" id="GO:0008289">
    <property type="term" value="F:lipid binding"/>
    <property type="evidence" value="ECO:0007669"/>
    <property type="project" value="UniProtKB-KW"/>
</dbReference>
<dbReference type="GO" id="GO:0046933">
    <property type="term" value="F:proton-transporting ATP synthase activity, rotational mechanism"/>
    <property type="evidence" value="ECO:0007669"/>
    <property type="project" value="UniProtKB-UniRule"/>
</dbReference>
<dbReference type="CDD" id="cd18183">
    <property type="entry name" value="ATP-synt_Fo_c_ATPH"/>
    <property type="match status" value="1"/>
</dbReference>
<dbReference type="FunFam" id="1.20.20.10:FF:000001">
    <property type="entry name" value="ATP synthase subunit c, chloroplastic"/>
    <property type="match status" value="1"/>
</dbReference>
<dbReference type="Gene3D" id="1.20.20.10">
    <property type="entry name" value="F1F0 ATP synthase subunit C"/>
    <property type="match status" value="1"/>
</dbReference>
<dbReference type="HAMAP" id="MF_01396">
    <property type="entry name" value="ATP_synth_c_bact"/>
    <property type="match status" value="1"/>
</dbReference>
<dbReference type="InterPro" id="IPR005953">
    <property type="entry name" value="ATP_synth_csu_bac/chlpt"/>
</dbReference>
<dbReference type="InterPro" id="IPR000454">
    <property type="entry name" value="ATP_synth_F0_csu"/>
</dbReference>
<dbReference type="InterPro" id="IPR020537">
    <property type="entry name" value="ATP_synth_F0_csu_DDCD_BS"/>
</dbReference>
<dbReference type="InterPro" id="IPR038662">
    <property type="entry name" value="ATP_synth_F0_csu_sf"/>
</dbReference>
<dbReference type="InterPro" id="IPR002379">
    <property type="entry name" value="ATPase_proteolipid_c-like_dom"/>
</dbReference>
<dbReference type="InterPro" id="IPR035921">
    <property type="entry name" value="F/V-ATP_Csub_sf"/>
</dbReference>
<dbReference type="NCBIfam" id="TIGR01260">
    <property type="entry name" value="ATP_synt_c"/>
    <property type="match status" value="1"/>
</dbReference>
<dbReference type="NCBIfam" id="NF005608">
    <property type="entry name" value="PRK07354.1"/>
    <property type="match status" value="1"/>
</dbReference>
<dbReference type="PANTHER" id="PTHR10031">
    <property type="entry name" value="ATP SYNTHASE LIPID-BINDING PROTEIN, MITOCHONDRIAL"/>
    <property type="match status" value="1"/>
</dbReference>
<dbReference type="PANTHER" id="PTHR10031:SF0">
    <property type="entry name" value="ATPASE PROTEIN 9"/>
    <property type="match status" value="1"/>
</dbReference>
<dbReference type="Pfam" id="PF00137">
    <property type="entry name" value="ATP-synt_C"/>
    <property type="match status" value="1"/>
</dbReference>
<dbReference type="PRINTS" id="PR00124">
    <property type="entry name" value="ATPASEC"/>
</dbReference>
<dbReference type="SUPFAM" id="SSF81333">
    <property type="entry name" value="F1F0 ATP synthase subunit C"/>
    <property type="match status" value="1"/>
</dbReference>
<dbReference type="PROSITE" id="PS00605">
    <property type="entry name" value="ATPASE_C"/>
    <property type="match status" value="1"/>
</dbReference>
<comment type="function">
    <text evidence="1">F(1)F(0) ATP synthase produces ATP from ADP in the presence of a proton or sodium gradient. F-type ATPases consist of two structural domains, F(1) containing the extramembraneous catalytic core and F(0) containing the membrane proton channel, linked together by a central stalk and a peripheral stalk. During catalysis, ATP synthesis in the catalytic domain of F(1) is coupled via a rotary mechanism of the central stalk subunits to proton translocation.</text>
</comment>
<comment type="function">
    <text evidence="1">Key component of the F(0) channel; it plays a direct role in translocation across the membrane. A homomeric c-ring of between 10-14 subunits forms the central stalk rotor element with the F(1) delta and epsilon subunits.</text>
</comment>
<comment type="subunit">
    <text evidence="1">F-type ATPases have 2 components, F(1) - the catalytic core - and F(0) - the membrane proton channel. F(1) has five subunits: alpha(3), beta(3), gamma(1), delta(1), epsilon(1). F(0) has four main subunits: a(1), b(1), b'(1) and c(10-14). The alpha and beta chains form an alternating ring which encloses part of the gamma chain. F(1) is attached to F(0) by a central stalk formed by the gamma and epsilon chains, while a peripheral stalk is formed by the delta, b and b' chains.</text>
</comment>
<comment type="subcellular location">
    <subcellularLocation>
        <location evidence="1">Plastid</location>
        <location evidence="1">Chloroplast thylakoid membrane</location>
        <topology evidence="1">Multi-pass membrane protein</topology>
    </subcellularLocation>
</comment>
<comment type="miscellaneous">
    <text>In plastids the F-type ATPase is also known as CF(1)CF(0).</text>
</comment>
<comment type="similarity">
    <text evidence="1">Belongs to the ATPase C chain family.</text>
</comment>
<name>ATPH_HETA4</name>
<accession>B2XTP2</accession>
<geneLocation type="chloroplast"/>